<name>KDUI_YERPG</name>
<accession>A9R0C4</accession>
<dbReference type="EC" id="5.3.1.17" evidence="1"/>
<dbReference type="EMBL" id="CP000901">
    <property type="protein sequence ID" value="ABX86032.1"/>
    <property type="molecule type" value="Genomic_DNA"/>
</dbReference>
<dbReference type="RefSeq" id="WP_002210829.1">
    <property type="nucleotide sequence ID" value="NZ_CP009935.1"/>
</dbReference>
<dbReference type="SMR" id="A9R0C4"/>
<dbReference type="GeneID" id="57976853"/>
<dbReference type="KEGG" id="ypg:YpAngola_A2642"/>
<dbReference type="PATRIC" id="fig|349746.12.peg.3669"/>
<dbReference type="UniPathway" id="UPA00545">
    <property type="reaction ID" value="UER00826"/>
</dbReference>
<dbReference type="GO" id="GO:0008697">
    <property type="term" value="F:4-deoxy-L-threo-5-hexosulose-uronate ketol-isomerase activity"/>
    <property type="evidence" value="ECO:0007669"/>
    <property type="project" value="UniProtKB-UniRule"/>
</dbReference>
<dbReference type="GO" id="GO:0008270">
    <property type="term" value="F:zinc ion binding"/>
    <property type="evidence" value="ECO:0007669"/>
    <property type="project" value="UniProtKB-UniRule"/>
</dbReference>
<dbReference type="GO" id="GO:0019698">
    <property type="term" value="P:D-galacturonate catabolic process"/>
    <property type="evidence" value="ECO:0007669"/>
    <property type="project" value="TreeGrafter"/>
</dbReference>
<dbReference type="GO" id="GO:0042840">
    <property type="term" value="P:D-glucuronate catabolic process"/>
    <property type="evidence" value="ECO:0007669"/>
    <property type="project" value="TreeGrafter"/>
</dbReference>
<dbReference type="GO" id="GO:0045490">
    <property type="term" value="P:pectin catabolic process"/>
    <property type="evidence" value="ECO:0007669"/>
    <property type="project" value="UniProtKB-UniRule"/>
</dbReference>
<dbReference type="CDD" id="cd20491">
    <property type="entry name" value="cupin_KduI_C"/>
    <property type="match status" value="1"/>
</dbReference>
<dbReference type="CDD" id="cd20294">
    <property type="entry name" value="cupin_KduI_N"/>
    <property type="match status" value="1"/>
</dbReference>
<dbReference type="FunFam" id="2.60.120.10:FF:000018">
    <property type="entry name" value="4-deoxy-L-threo-5-hexosulose-uronate ketol-isomerase"/>
    <property type="match status" value="1"/>
</dbReference>
<dbReference type="FunFam" id="2.60.120.520:FF:000001">
    <property type="entry name" value="4-deoxy-L-threo-5-hexosulose-uronate ketol-isomerase"/>
    <property type="match status" value="1"/>
</dbReference>
<dbReference type="Gene3D" id="2.60.120.10">
    <property type="entry name" value="Jelly Rolls"/>
    <property type="match status" value="1"/>
</dbReference>
<dbReference type="Gene3D" id="2.60.120.520">
    <property type="entry name" value="pectin degrading enzyme 5-keto 4- deoxyuronate isomerase, domain 1"/>
    <property type="match status" value="1"/>
</dbReference>
<dbReference type="HAMAP" id="MF_00687">
    <property type="entry name" value="KduI"/>
    <property type="match status" value="1"/>
</dbReference>
<dbReference type="InterPro" id="IPR007045">
    <property type="entry name" value="KduI"/>
</dbReference>
<dbReference type="InterPro" id="IPR021120">
    <property type="entry name" value="KduI/IolB_isomerase"/>
</dbReference>
<dbReference type="InterPro" id="IPR027449">
    <property type="entry name" value="KduI_N"/>
</dbReference>
<dbReference type="InterPro" id="IPR014710">
    <property type="entry name" value="RmlC-like_jellyroll"/>
</dbReference>
<dbReference type="InterPro" id="IPR011051">
    <property type="entry name" value="RmlC_Cupin_sf"/>
</dbReference>
<dbReference type="NCBIfam" id="NF002091">
    <property type="entry name" value="PRK00924.1"/>
    <property type="match status" value="1"/>
</dbReference>
<dbReference type="PANTHER" id="PTHR38461">
    <property type="entry name" value="4-DEOXY-L-THREO-5-HEXOSULOSE-URONATE KETOL-ISOMERASE"/>
    <property type="match status" value="1"/>
</dbReference>
<dbReference type="PANTHER" id="PTHR38461:SF1">
    <property type="entry name" value="4-DEOXY-L-THREO-5-HEXOSULOSE-URONATE KETOL-ISOMERASE"/>
    <property type="match status" value="1"/>
</dbReference>
<dbReference type="Pfam" id="PF04962">
    <property type="entry name" value="KduI"/>
    <property type="match status" value="1"/>
</dbReference>
<dbReference type="PIRSF" id="PIRSF006625">
    <property type="entry name" value="KduI"/>
    <property type="match status" value="1"/>
</dbReference>
<dbReference type="SUPFAM" id="SSF51182">
    <property type="entry name" value="RmlC-like cupins"/>
    <property type="match status" value="1"/>
</dbReference>
<evidence type="ECO:0000255" key="1">
    <source>
        <dbReference type="HAMAP-Rule" id="MF_00687"/>
    </source>
</evidence>
<protein>
    <recommendedName>
        <fullName evidence="1">4-deoxy-L-threo-5-hexosulose-uronate ketol-isomerase</fullName>
        <ecNumber evidence="1">5.3.1.17</ecNumber>
    </recommendedName>
    <alternativeName>
        <fullName evidence="1">5-keto-4-deoxyuronate isomerase</fullName>
    </alternativeName>
    <alternativeName>
        <fullName evidence="1">DKI isomerase</fullName>
    </alternativeName>
</protein>
<reference key="1">
    <citation type="journal article" date="2010" name="J. Bacteriol.">
        <title>Genome sequence of the deep-rooted Yersinia pestis strain Angola reveals new insights into the evolution and pangenome of the plague bacterium.</title>
        <authorList>
            <person name="Eppinger M."/>
            <person name="Worsham P.L."/>
            <person name="Nikolich M.P."/>
            <person name="Riley D.R."/>
            <person name="Sebastian Y."/>
            <person name="Mou S."/>
            <person name="Achtman M."/>
            <person name="Lindler L.E."/>
            <person name="Ravel J."/>
        </authorList>
    </citation>
    <scope>NUCLEOTIDE SEQUENCE [LARGE SCALE GENOMIC DNA]</scope>
    <source>
        <strain>Angola</strain>
    </source>
</reference>
<gene>
    <name evidence="1" type="primary">kduI</name>
    <name type="ordered locus">YpAngola_A2642</name>
</gene>
<comment type="function">
    <text evidence="1">Catalyzes the isomerization of 5-dehydro-4-deoxy-D-glucuronate to 3-deoxy-D-glycero-2,5-hexodiulosonate.</text>
</comment>
<comment type="catalytic activity">
    <reaction evidence="1">
        <text>5-dehydro-4-deoxy-D-glucuronate = 3-deoxy-D-glycero-2,5-hexodiulosonate</text>
        <dbReference type="Rhea" id="RHEA:23896"/>
        <dbReference type="ChEBI" id="CHEBI:17117"/>
        <dbReference type="ChEBI" id="CHEBI:29071"/>
        <dbReference type="EC" id="5.3.1.17"/>
    </reaction>
</comment>
<comment type="cofactor">
    <cofactor evidence="1">
        <name>Zn(2+)</name>
        <dbReference type="ChEBI" id="CHEBI:29105"/>
    </cofactor>
    <text evidence="1">Binds 1 zinc ion per subunit.</text>
</comment>
<comment type="pathway">
    <text evidence="1">Glycan metabolism; pectin degradation; 2-dehydro-3-deoxy-D-gluconate from pectin: step 4/5.</text>
</comment>
<comment type="similarity">
    <text evidence="1">Belongs to the KduI family.</text>
</comment>
<feature type="chain" id="PRO_1000131899" description="4-deoxy-L-threo-5-hexosulose-uronate ketol-isomerase">
    <location>
        <begin position="1"/>
        <end position="278"/>
    </location>
</feature>
<feature type="binding site" evidence="1">
    <location>
        <position position="196"/>
    </location>
    <ligand>
        <name>Zn(2+)</name>
        <dbReference type="ChEBI" id="CHEBI:29105"/>
    </ligand>
</feature>
<feature type="binding site" evidence="1">
    <location>
        <position position="198"/>
    </location>
    <ligand>
        <name>Zn(2+)</name>
        <dbReference type="ChEBI" id="CHEBI:29105"/>
    </ligand>
</feature>
<feature type="binding site" evidence="1">
    <location>
        <position position="203"/>
    </location>
    <ligand>
        <name>Zn(2+)</name>
        <dbReference type="ChEBI" id="CHEBI:29105"/>
    </ligand>
</feature>
<feature type="binding site" evidence="1">
    <location>
        <position position="245"/>
    </location>
    <ligand>
        <name>Zn(2+)</name>
        <dbReference type="ChEBI" id="CHEBI:29105"/>
    </ligand>
</feature>
<sequence length="278" mass="31083">MQVRQSIHSDHAKQLDTAGLRREFLIEKIFAADDYTMTYSHIDRIIVGGILPVSKAVSIGNEVGKQLGVSYFLERRELGAINIGGPGLIVVDGQTYDIGNEEALYVGKGAKEVKFSSIDRANPAKFYYNSAPAHTTYPNKKITLAEASPQTLGDDATSNRRTINKYIVPDVLPTCQLSMGLTKLAPGSLWNTMPCHTHERRMEVYFYFDMDEETAVFHMMGQPQETRHLLVHNEQAVISPSWSIHSGVGTKRYTFIWGMVGENQVFGDMDHIAVSELR</sequence>
<keyword id="KW-0413">Isomerase</keyword>
<keyword id="KW-0479">Metal-binding</keyword>
<keyword id="KW-0862">Zinc</keyword>
<proteinExistence type="inferred from homology"/>
<organism>
    <name type="scientific">Yersinia pestis bv. Antiqua (strain Angola)</name>
    <dbReference type="NCBI Taxonomy" id="349746"/>
    <lineage>
        <taxon>Bacteria</taxon>
        <taxon>Pseudomonadati</taxon>
        <taxon>Pseudomonadota</taxon>
        <taxon>Gammaproteobacteria</taxon>
        <taxon>Enterobacterales</taxon>
        <taxon>Yersiniaceae</taxon>
        <taxon>Yersinia</taxon>
    </lineage>
</organism>